<proteinExistence type="inferred from homology"/>
<keyword id="KW-0945">Host-virus interaction</keyword>
<keyword id="KW-1090">Inhibition of host innate immune response by virus</keyword>
<keyword id="KW-0922">Interferon antiviral system evasion</keyword>
<keyword id="KW-0732">Signal</keyword>
<keyword id="KW-0899">Viral immunoevasion</keyword>
<gene>
    <name type="ORF">3a</name>
</gene>
<evidence type="ECO:0000250" key="1">
    <source>
        <dbReference type="UniProtKB" id="P30237"/>
    </source>
</evidence>
<evidence type="ECO:0000255" key="2"/>
<comment type="function">
    <text evidence="1">Involved in resistance to IFN.</text>
</comment>
<organism>
    <name type="scientific">Avian infectious bronchitis virus (strain UK/183/66)</name>
    <name type="common">IBV</name>
    <dbReference type="NCBI Taxonomy" id="31629"/>
    <lineage>
        <taxon>Viruses</taxon>
        <taxon>Riboviria</taxon>
        <taxon>Orthornavirae</taxon>
        <taxon>Pisuviricota</taxon>
        <taxon>Pisoniviricetes</taxon>
        <taxon>Nidovirales</taxon>
        <taxon>Cornidovirineae</taxon>
        <taxon>Coronaviridae</taxon>
        <taxon>Orthocoronavirinae</taxon>
        <taxon>Gammacoronavirus</taxon>
        <taxon>Igacovirus</taxon>
        <taxon>Avian coronavirus</taxon>
    </lineage>
</organism>
<organismHost>
    <name type="scientific">Gallus gallus</name>
    <name type="common">Chicken</name>
    <dbReference type="NCBI Taxonomy" id="9031"/>
</organismHost>
<protein>
    <recommendedName>
        <fullName>Non-structural protein 3a</fullName>
        <shortName>ns3a</shortName>
    </recommendedName>
    <alternativeName>
        <fullName>Accessory protein 3a</fullName>
    </alternativeName>
</protein>
<accession>P30240</accession>
<sequence>MIQSPTSFLIVLILLWCKLVISCFRECIVALQQLIQVLLQIINSNLQSRLLLWHSLD</sequence>
<reference key="1">
    <citation type="journal article" date="1991" name="Virology">
        <title>A polycistronic mRNA specified by the coronavirus infectious bronchitis virus.</title>
        <authorList>
            <person name="Liu D.X."/>
            <person name="Cavanagh D."/>
            <person name="Green P."/>
            <person name="Inglis S.C."/>
        </authorList>
    </citation>
    <scope>NUCLEOTIDE SEQUENCE [GENOMIC RNA]</scope>
</reference>
<feature type="signal peptide" evidence="2">
    <location>
        <begin position="1"/>
        <end position="23"/>
    </location>
</feature>
<feature type="chain" id="PRO_0000106112" description="Non-structural protein 3a">
    <location>
        <begin position="24"/>
        <end position="57"/>
    </location>
</feature>
<dbReference type="EMBL" id="X59820">
    <property type="protein sequence ID" value="CAA42490.1"/>
    <property type="molecule type" value="Genomic_RNA"/>
</dbReference>
<dbReference type="PIR" id="D36816">
    <property type="entry name" value="WMIH24"/>
</dbReference>
<dbReference type="SMR" id="P30240"/>
<dbReference type="GO" id="GO:0052170">
    <property type="term" value="P:symbiont-mediated suppression of host innate immune response"/>
    <property type="evidence" value="ECO:0007669"/>
    <property type="project" value="UniProtKB-KW"/>
</dbReference>
<dbReference type="InterPro" id="IPR005214">
    <property type="entry name" value="IBV_3A"/>
</dbReference>
<dbReference type="Pfam" id="PF03617">
    <property type="entry name" value="IBV_3A"/>
    <property type="match status" value="1"/>
</dbReference>
<name>NS3A_IBVU5</name>